<protein>
    <recommendedName>
        <fullName evidence="1">6,7-dimethyl-8-ribityllumazine synthase</fullName>
        <shortName evidence="1">DMRL synthase</shortName>
        <shortName evidence="1">LS</shortName>
        <shortName evidence="1">Lumazine synthase</shortName>
        <ecNumber evidence="1">2.5.1.78</ecNumber>
    </recommendedName>
</protein>
<accession>B4UIM2</accession>
<gene>
    <name evidence="1" type="primary">ribH</name>
    <name type="ordered locus">AnaeK_2831</name>
</gene>
<reference key="1">
    <citation type="submission" date="2008-08" db="EMBL/GenBank/DDBJ databases">
        <title>Complete sequence of Anaeromyxobacter sp. K.</title>
        <authorList>
            <consortium name="US DOE Joint Genome Institute"/>
            <person name="Lucas S."/>
            <person name="Copeland A."/>
            <person name="Lapidus A."/>
            <person name="Glavina del Rio T."/>
            <person name="Dalin E."/>
            <person name="Tice H."/>
            <person name="Bruce D."/>
            <person name="Goodwin L."/>
            <person name="Pitluck S."/>
            <person name="Saunders E."/>
            <person name="Brettin T."/>
            <person name="Detter J.C."/>
            <person name="Han C."/>
            <person name="Larimer F."/>
            <person name="Land M."/>
            <person name="Hauser L."/>
            <person name="Kyrpides N."/>
            <person name="Ovchinnikiva G."/>
            <person name="Beliaev A."/>
        </authorList>
    </citation>
    <scope>NUCLEOTIDE SEQUENCE [LARGE SCALE GENOMIC DNA]</scope>
    <source>
        <strain>K</strain>
    </source>
</reference>
<evidence type="ECO:0000255" key="1">
    <source>
        <dbReference type="HAMAP-Rule" id="MF_00178"/>
    </source>
</evidence>
<name>RISB_ANASK</name>
<organism>
    <name type="scientific">Anaeromyxobacter sp. (strain K)</name>
    <dbReference type="NCBI Taxonomy" id="447217"/>
    <lineage>
        <taxon>Bacteria</taxon>
        <taxon>Pseudomonadati</taxon>
        <taxon>Myxococcota</taxon>
        <taxon>Myxococcia</taxon>
        <taxon>Myxococcales</taxon>
        <taxon>Cystobacterineae</taxon>
        <taxon>Anaeromyxobacteraceae</taxon>
        <taxon>Anaeromyxobacter</taxon>
    </lineage>
</organism>
<feature type="chain" id="PRO_1000098161" description="6,7-dimethyl-8-ribityllumazine synthase">
    <location>
        <begin position="1"/>
        <end position="162"/>
    </location>
</feature>
<feature type="active site" description="Proton donor" evidence="1">
    <location>
        <position position="88"/>
    </location>
</feature>
<feature type="binding site" evidence="1">
    <location>
        <position position="22"/>
    </location>
    <ligand>
        <name>5-amino-6-(D-ribitylamino)uracil</name>
        <dbReference type="ChEBI" id="CHEBI:15934"/>
    </ligand>
</feature>
<feature type="binding site" evidence="1">
    <location>
        <begin position="56"/>
        <end position="58"/>
    </location>
    <ligand>
        <name>5-amino-6-(D-ribitylamino)uracil</name>
        <dbReference type="ChEBI" id="CHEBI:15934"/>
    </ligand>
</feature>
<feature type="binding site" evidence="1">
    <location>
        <begin position="80"/>
        <end position="82"/>
    </location>
    <ligand>
        <name>5-amino-6-(D-ribitylamino)uracil</name>
        <dbReference type="ChEBI" id="CHEBI:15934"/>
    </ligand>
</feature>
<feature type="binding site" evidence="1">
    <location>
        <begin position="85"/>
        <end position="86"/>
    </location>
    <ligand>
        <name>(2S)-2-hydroxy-3-oxobutyl phosphate</name>
        <dbReference type="ChEBI" id="CHEBI:58830"/>
    </ligand>
</feature>
<feature type="binding site" evidence="1">
    <location>
        <position position="113"/>
    </location>
    <ligand>
        <name>5-amino-6-(D-ribitylamino)uracil</name>
        <dbReference type="ChEBI" id="CHEBI:15934"/>
    </ligand>
</feature>
<feature type="binding site" evidence="1">
    <location>
        <position position="127"/>
    </location>
    <ligand>
        <name>(2S)-2-hydroxy-3-oxobutyl phosphate</name>
        <dbReference type="ChEBI" id="CHEBI:58830"/>
    </ligand>
</feature>
<dbReference type="EC" id="2.5.1.78" evidence="1"/>
<dbReference type="EMBL" id="CP001131">
    <property type="protein sequence ID" value="ACG74055.1"/>
    <property type="molecule type" value="Genomic_DNA"/>
</dbReference>
<dbReference type="RefSeq" id="WP_012526834.1">
    <property type="nucleotide sequence ID" value="NC_011145.1"/>
</dbReference>
<dbReference type="SMR" id="B4UIM2"/>
<dbReference type="KEGG" id="ank:AnaeK_2831"/>
<dbReference type="HOGENOM" id="CLU_089358_1_1_7"/>
<dbReference type="OrthoDB" id="9809709at2"/>
<dbReference type="UniPathway" id="UPA00275">
    <property type="reaction ID" value="UER00404"/>
</dbReference>
<dbReference type="Proteomes" id="UP000001871">
    <property type="component" value="Chromosome"/>
</dbReference>
<dbReference type="GO" id="GO:0005829">
    <property type="term" value="C:cytosol"/>
    <property type="evidence" value="ECO:0007669"/>
    <property type="project" value="TreeGrafter"/>
</dbReference>
<dbReference type="GO" id="GO:0009349">
    <property type="term" value="C:riboflavin synthase complex"/>
    <property type="evidence" value="ECO:0007669"/>
    <property type="project" value="InterPro"/>
</dbReference>
<dbReference type="GO" id="GO:0000906">
    <property type="term" value="F:6,7-dimethyl-8-ribityllumazine synthase activity"/>
    <property type="evidence" value="ECO:0007669"/>
    <property type="project" value="UniProtKB-UniRule"/>
</dbReference>
<dbReference type="GO" id="GO:0009231">
    <property type="term" value="P:riboflavin biosynthetic process"/>
    <property type="evidence" value="ECO:0007669"/>
    <property type="project" value="UniProtKB-UniRule"/>
</dbReference>
<dbReference type="CDD" id="cd09209">
    <property type="entry name" value="Lumazine_synthase-I"/>
    <property type="match status" value="1"/>
</dbReference>
<dbReference type="FunFam" id="3.40.50.960:FF:000001">
    <property type="entry name" value="6,7-dimethyl-8-ribityllumazine synthase"/>
    <property type="match status" value="1"/>
</dbReference>
<dbReference type="Gene3D" id="3.40.50.960">
    <property type="entry name" value="Lumazine/riboflavin synthase"/>
    <property type="match status" value="1"/>
</dbReference>
<dbReference type="HAMAP" id="MF_00178">
    <property type="entry name" value="Lumazine_synth"/>
    <property type="match status" value="1"/>
</dbReference>
<dbReference type="InterPro" id="IPR034964">
    <property type="entry name" value="LS"/>
</dbReference>
<dbReference type="InterPro" id="IPR002180">
    <property type="entry name" value="LS/RS"/>
</dbReference>
<dbReference type="InterPro" id="IPR036467">
    <property type="entry name" value="LS/RS_sf"/>
</dbReference>
<dbReference type="NCBIfam" id="TIGR00114">
    <property type="entry name" value="lumazine-synth"/>
    <property type="match status" value="1"/>
</dbReference>
<dbReference type="NCBIfam" id="NF000812">
    <property type="entry name" value="PRK00061.1-4"/>
    <property type="match status" value="1"/>
</dbReference>
<dbReference type="PANTHER" id="PTHR21058:SF0">
    <property type="entry name" value="6,7-DIMETHYL-8-RIBITYLLUMAZINE SYNTHASE"/>
    <property type="match status" value="1"/>
</dbReference>
<dbReference type="PANTHER" id="PTHR21058">
    <property type="entry name" value="6,7-DIMETHYL-8-RIBITYLLUMAZINE SYNTHASE DMRL SYNTHASE LUMAZINE SYNTHASE"/>
    <property type="match status" value="1"/>
</dbReference>
<dbReference type="Pfam" id="PF00885">
    <property type="entry name" value="DMRL_synthase"/>
    <property type="match status" value="1"/>
</dbReference>
<dbReference type="SUPFAM" id="SSF52121">
    <property type="entry name" value="Lumazine synthase"/>
    <property type="match status" value="1"/>
</dbReference>
<keyword id="KW-0686">Riboflavin biosynthesis</keyword>
<keyword id="KW-0808">Transferase</keyword>
<proteinExistence type="inferred from homology"/>
<comment type="function">
    <text evidence="1">Catalyzes the formation of 6,7-dimethyl-8-ribityllumazine by condensation of 5-amino-6-(D-ribitylamino)uracil with 3,4-dihydroxy-2-butanone 4-phosphate. This is the penultimate step in the biosynthesis of riboflavin.</text>
</comment>
<comment type="catalytic activity">
    <reaction evidence="1">
        <text>(2S)-2-hydroxy-3-oxobutyl phosphate + 5-amino-6-(D-ribitylamino)uracil = 6,7-dimethyl-8-(1-D-ribityl)lumazine + phosphate + 2 H2O + H(+)</text>
        <dbReference type="Rhea" id="RHEA:26152"/>
        <dbReference type="ChEBI" id="CHEBI:15377"/>
        <dbReference type="ChEBI" id="CHEBI:15378"/>
        <dbReference type="ChEBI" id="CHEBI:15934"/>
        <dbReference type="ChEBI" id="CHEBI:43474"/>
        <dbReference type="ChEBI" id="CHEBI:58201"/>
        <dbReference type="ChEBI" id="CHEBI:58830"/>
        <dbReference type="EC" id="2.5.1.78"/>
    </reaction>
</comment>
<comment type="pathway">
    <text evidence="1">Cofactor biosynthesis; riboflavin biosynthesis; riboflavin from 2-hydroxy-3-oxobutyl phosphate and 5-amino-6-(D-ribitylamino)uracil: step 1/2.</text>
</comment>
<comment type="similarity">
    <text evidence="1">Belongs to the DMRL synthase family.</text>
</comment>
<sequence length="162" mass="16661">MNVYEGSLVGTGLKAALVVARFNSLVTEQLLVGAADALRRHGVADGDVDVFRCPGTFELPAVLRRVVATGRYDAVVALGAVIRGGTPHFEYVSAEVTKGVAHVAMEAGCAVTMGVLTCDSMEQALERAGVKAGNKGADAAAAAVEQANVLRAIARAPARKAE</sequence>